<name>RIC1_CAEEL</name>
<protein>
    <recommendedName>
        <fullName evidence="5">Guanine nucleotide exchange factor subunit R06F6.8</fullName>
    </recommendedName>
    <alternativeName>
        <fullName evidence="1">Protein RIC1 homolog</fullName>
    </alternativeName>
</protein>
<evidence type="ECO:0000250" key="1">
    <source>
        <dbReference type="UniProtKB" id="P40395"/>
    </source>
</evidence>
<evidence type="ECO:0000250" key="2">
    <source>
        <dbReference type="UniProtKB" id="Q4ADV7"/>
    </source>
</evidence>
<evidence type="ECO:0000255" key="3"/>
<evidence type="ECO:0000256" key="4">
    <source>
        <dbReference type="SAM" id="MobiDB-lite"/>
    </source>
</evidence>
<evidence type="ECO:0000305" key="5"/>
<keyword id="KW-0025">Alternative splicing</keyword>
<keyword id="KW-0472">Membrane</keyword>
<keyword id="KW-1185">Reference proteome</keyword>
<keyword id="KW-0677">Repeat</keyword>
<keyword id="KW-0812">Transmembrane</keyword>
<keyword id="KW-1133">Transmembrane helix</keyword>
<keyword id="KW-0853">WD repeat</keyword>
<gene>
    <name type="ORF">R06F6.8</name>
</gene>
<proteinExistence type="inferred from homology"/>
<organism>
    <name type="scientific">Caenorhabditis elegans</name>
    <dbReference type="NCBI Taxonomy" id="6239"/>
    <lineage>
        <taxon>Eukaryota</taxon>
        <taxon>Metazoa</taxon>
        <taxon>Ecdysozoa</taxon>
        <taxon>Nematoda</taxon>
        <taxon>Chromadorea</taxon>
        <taxon>Rhabditida</taxon>
        <taxon>Rhabditina</taxon>
        <taxon>Rhabditomorpha</taxon>
        <taxon>Rhabditoidea</taxon>
        <taxon>Rhabditidae</taxon>
        <taxon>Peloderinae</taxon>
        <taxon>Caenorhabditis</taxon>
    </lineage>
</organism>
<comment type="function">
    <text evidence="2">Probable component of a guanine nucleotide exchange factor (GEF) that may be required for efficient fusion of endosome-derived vesicles with the Golgi.</text>
</comment>
<comment type="subunit">
    <text evidence="2">Component of a guanine nucleotide exchange factor (GEF) complex.</text>
</comment>
<comment type="subcellular location">
    <subcellularLocation>
        <location evidence="5">Membrane</location>
        <topology evidence="5">Single-pass membrane protein</topology>
    </subcellularLocation>
</comment>
<comment type="alternative products">
    <event type="alternative splicing"/>
    <isoform>
        <id>Q09417-1</id>
        <name>b</name>
        <sequence type="displayed"/>
    </isoform>
    <isoform>
        <id>Q09417-2</id>
        <name>a</name>
        <sequence type="described" ref="VSP_012311"/>
    </isoform>
</comment>
<comment type="similarity">
    <text evidence="5">Belongs to the RIC1 family.</text>
</comment>
<sequence length="1470" mass="163385">MFIPNDRPSVLQLPKHEKDSTAADIKSIVANRDRRLIAVATNDAIYIWLANPQLLLCSVGVIDANFKETRGELKEIYWKPDSTSIAVTTNQCKILIYNLDLRDDEQCYNFTDSADPYFQRNSPELFIKGSRPTAHLHPTIIINLADIPTCCVPSRDEFLVCLQNGFTHHVTWTGEIIASLSFRASSIPFSVDQLQSKSENITSKSTYIFDAVYAPLLGGFAIVLSDGQGALLTSNDPNFAPNAILGVWAPNMKDATCCDVNHKFLLILFGCKNGDVCAYNIDELNGSLVQSFRVAPKVTNGPDLTNRLGPVHRITALANGYGFGAIWSPLSGAHALPRLVAVFTSFGAQSFCNLEGVVEEDQNDRYTAIEWGPEGFQLWLGTENELMMQPFVRSASCSSPAMEHCDRAVLMSDSQVLISAARDREAEACAPHSVWDHITVTHEYLSSNWPLRYASTDRNYKHLVVAGDQGMAYCSLSNRRWKIFGNETQEKNLLVTGGVFIWNDDVIGVVGVAADTDKSHLSFYPISQRLDSRYASVVDLEHKSVMSVLRDDVCAVFDISAQITLYKLTAHLETGRDAFTKVSTEIVTVIRINEIVPHPTCIVSLQMTQLNLDVRGKLSPAFYSSIDTVLVNISGRLITLSVNEDGKLHQPMVIASYVEKMWHDRCQVSQSTQSQNQDLPWKNHRRNGSNVSIQSVSTSTTSEPSSPMNQSCSSHLSNALWIACGAKGIKVWMPLVPGKRNLATQEMTFIAKRIMLPFELDIYPIVISAKDCLAMGVESQLQHVARASRNQGQMESITMYGLHRNSEVFVHHLLRQLLKRNLGVFALELAGACRSLPHFTHALELLLHGVLEEEATSSEPIPDPLLPRCVAFIHEFPEFLKTVAHCARKTELALWRTLFDVTGSPNALFEECLQLKQLENAASFVIVLQNLETTEVSMDQAARLVKEALEEKKWTIAKEMVRFARSIGSEDIDAFFRTPPPSAKTSLSRRPTVSSPSADSSTEFVINRFQAGAAGGRLNKVRHSQSTEQKDAPRKDSIGGSSKDKMALSWGLSGELSPQLATNRLAAKMTSILEDHAWHLLNNYWLLDLGFFWSELQFDLLGLLETRRKQISLSPKTTNENCFLIEDFALALTRLHAQFSWPYPLIGSQFVHQIEKKLGNIRVSQSTASLNGLLNDSLDNIKKPKARKLERTVVDLNGARSRIRETDIEASEEDVEIQEAVLERVRGSAVELAPVIDRSPSTSSSMNHHAPLAPPSPSSCDSRSLAGDCYQNTDFLVGEKSSRGNLQSSHQLELLLSLFSQTATIDWIFLFCLLSRDERKLRQEINVSMVRRAGEKSFARVRFACSELSRWAVEKCCGYVALLQAFDAHLAVVAEQAGCADLKFSPDNENRKASQKTSADDPKRGRRRADSGSSKLNNSFSNPKLNGMNGGRRERSRSADRAHKSVKRYDDVVCAEDALEKANEEGCSIM</sequence>
<accession>Q09417</accession>
<accession>O62341</accession>
<dbReference type="EMBL" id="Z46794">
    <property type="protein sequence ID" value="CAA86778.2"/>
    <property type="molecule type" value="Genomic_DNA"/>
</dbReference>
<dbReference type="EMBL" id="Z46794">
    <property type="protein sequence ID" value="CAA86785.2"/>
    <property type="molecule type" value="Genomic_DNA"/>
</dbReference>
<dbReference type="PIR" id="T23979">
    <property type="entry name" value="T23979"/>
</dbReference>
<dbReference type="PIR" id="T23986">
    <property type="entry name" value="T23986"/>
</dbReference>
<dbReference type="RefSeq" id="NP_001369860.1">
    <molecule id="Q09417-2"/>
    <property type="nucleotide sequence ID" value="NM_001383942.2"/>
</dbReference>
<dbReference type="RefSeq" id="NP_496328.2">
    <molecule id="Q09417-1"/>
    <property type="nucleotide sequence ID" value="NM_063927.7"/>
</dbReference>
<dbReference type="RefSeq" id="NP_496329.2">
    <property type="nucleotide sequence ID" value="NM_063928.6"/>
</dbReference>
<dbReference type="BioGRID" id="39977">
    <property type="interactions" value="15"/>
</dbReference>
<dbReference type="DIP" id="DIP-26765N"/>
<dbReference type="FunCoup" id="Q09417">
    <property type="interactions" value="2639"/>
</dbReference>
<dbReference type="IntAct" id="Q09417">
    <property type="interactions" value="8"/>
</dbReference>
<dbReference type="MINT" id="Q09417"/>
<dbReference type="STRING" id="6239.R06F6.8b.1"/>
<dbReference type="iPTMnet" id="Q09417"/>
<dbReference type="PaxDb" id="6239-R06F6.8b"/>
<dbReference type="PeptideAtlas" id="Q09417"/>
<dbReference type="EnsemblMetazoa" id="R06F6.8a.1">
    <molecule id="Q09417-2"/>
    <property type="protein sequence ID" value="R06F6.8a.1"/>
    <property type="gene ID" value="WBGene00011071"/>
</dbReference>
<dbReference type="EnsemblMetazoa" id="R06F6.8b.1">
    <molecule id="Q09417-1"/>
    <property type="protein sequence ID" value="R06F6.8b.1"/>
    <property type="gene ID" value="WBGene00011071"/>
</dbReference>
<dbReference type="GeneID" id="174664"/>
<dbReference type="KEGG" id="cel:CELE_R06F6.8"/>
<dbReference type="UCSC" id="R06F6.8b">
    <molecule id="Q09417-1"/>
    <property type="organism name" value="c. elegans"/>
</dbReference>
<dbReference type="AGR" id="WB:WBGene00011071"/>
<dbReference type="CTD" id="174664"/>
<dbReference type="WormBase" id="R06F6.8a">
    <molecule id="Q09417-2"/>
    <property type="protein sequence ID" value="CE36946"/>
    <property type="gene ID" value="WBGene00011071"/>
</dbReference>
<dbReference type="WormBase" id="R06F6.8b">
    <molecule id="Q09417-1"/>
    <property type="protein sequence ID" value="CE36947"/>
    <property type="gene ID" value="WBGene00011071"/>
</dbReference>
<dbReference type="eggNOG" id="KOG2006">
    <property type="taxonomic scope" value="Eukaryota"/>
</dbReference>
<dbReference type="GeneTree" id="ENSGT00390000002955"/>
<dbReference type="InParanoid" id="Q09417"/>
<dbReference type="OMA" id="MVYDRAM"/>
<dbReference type="OrthoDB" id="67540at2759"/>
<dbReference type="PhylomeDB" id="Q09417"/>
<dbReference type="Reactome" id="R-CEL-6811438">
    <property type="pathway name" value="Intra-Golgi traffic"/>
</dbReference>
<dbReference type="Reactome" id="R-CEL-6811440">
    <property type="pathway name" value="Retrograde transport at the Trans-Golgi-Network"/>
</dbReference>
<dbReference type="Reactome" id="R-CEL-8876198">
    <property type="pathway name" value="RAB GEFs exchange GTP for GDP on RABs"/>
</dbReference>
<dbReference type="PRO" id="PR:Q09417"/>
<dbReference type="Proteomes" id="UP000001940">
    <property type="component" value="Chromosome II"/>
</dbReference>
<dbReference type="Bgee" id="WBGene00011071">
    <property type="expression patterns" value="Expressed in adult organism and 4 other cell types or tissues"/>
</dbReference>
<dbReference type="GO" id="GO:0005829">
    <property type="term" value="C:cytosol"/>
    <property type="evidence" value="ECO:0000250"/>
    <property type="project" value="UniProtKB"/>
</dbReference>
<dbReference type="GO" id="GO:0000139">
    <property type="term" value="C:Golgi membrane"/>
    <property type="evidence" value="ECO:0000318"/>
    <property type="project" value="GO_Central"/>
</dbReference>
<dbReference type="GO" id="GO:0016020">
    <property type="term" value="C:membrane"/>
    <property type="evidence" value="ECO:0000250"/>
    <property type="project" value="UniProtKB"/>
</dbReference>
<dbReference type="GO" id="GO:0032991">
    <property type="term" value="C:protein-containing complex"/>
    <property type="evidence" value="ECO:0000250"/>
    <property type="project" value="UniProtKB"/>
</dbReference>
<dbReference type="GO" id="GO:0034066">
    <property type="term" value="C:Ric1-Rgp1 guanyl-nucleotide exchange factor complex"/>
    <property type="evidence" value="ECO:0000250"/>
    <property type="project" value="UniProtKB"/>
</dbReference>
<dbReference type="GO" id="GO:0005085">
    <property type="term" value="F:guanyl-nucleotide exchange factor activity"/>
    <property type="evidence" value="ECO:0000250"/>
    <property type="project" value="UniProtKB"/>
</dbReference>
<dbReference type="GO" id="GO:0031267">
    <property type="term" value="F:small GTPase binding"/>
    <property type="evidence" value="ECO:0000250"/>
    <property type="project" value="UniProtKB"/>
</dbReference>
<dbReference type="GO" id="GO:0006886">
    <property type="term" value="P:intracellular protein transport"/>
    <property type="evidence" value="ECO:0000318"/>
    <property type="project" value="GO_Central"/>
</dbReference>
<dbReference type="GO" id="GO:0042177">
    <property type="term" value="P:negative regulation of protein catabolic process"/>
    <property type="evidence" value="ECO:0000250"/>
    <property type="project" value="UniProtKB"/>
</dbReference>
<dbReference type="GO" id="GO:0043547">
    <property type="term" value="P:positive regulation of GTPase activity"/>
    <property type="evidence" value="ECO:0000250"/>
    <property type="project" value="UniProtKB"/>
</dbReference>
<dbReference type="GO" id="GO:0042147">
    <property type="term" value="P:retrograde transport, endosome to Golgi"/>
    <property type="evidence" value="ECO:0000250"/>
    <property type="project" value="UniProtKB"/>
</dbReference>
<dbReference type="InterPro" id="IPR040096">
    <property type="entry name" value="Ric1"/>
</dbReference>
<dbReference type="InterPro" id="IPR009771">
    <property type="entry name" value="RIC1_C"/>
</dbReference>
<dbReference type="InterPro" id="IPR036322">
    <property type="entry name" value="WD40_repeat_dom_sf"/>
</dbReference>
<dbReference type="PANTHER" id="PTHR22746:SF10">
    <property type="entry name" value="GUANINE NUCLEOTIDE EXCHANGE FACTOR SUBUNIT RIC1"/>
    <property type="match status" value="1"/>
</dbReference>
<dbReference type="PANTHER" id="PTHR22746">
    <property type="entry name" value="RAB6A-GEF COMPLEX PARTNER PROTEIN 1"/>
    <property type="match status" value="1"/>
</dbReference>
<dbReference type="Pfam" id="PF25440">
    <property type="entry name" value="Beta-prop_RIC1_2nd"/>
    <property type="match status" value="1"/>
</dbReference>
<dbReference type="Pfam" id="PF07064">
    <property type="entry name" value="RIC1"/>
    <property type="match status" value="1"/>
</dbReference>
<dbReference type="SUPFAM" id="SSF50978">
    <property type="entry name" value="WD40 repeat-like"/>
    <property type="match status" value="1"/>
</dbReference>
<feature type="chain" id="PRO_0000051511" description="Guanine nucleotide exchange factor subunit R06F6.8">
    <location>
        <begin position="1"/>
        <end position="1470"/>
    </location>
</feature>
<feature type="transmembrane region" description="Helical" evidence="3">
    <location>
        <begin position="1294"/>
        <end position="1314"/>
    </location>
</feature>
<feature type="repeat" description="WD 1">
    <location>
        <begin position="20"/>
        <end position="58"/>
    </location>
</feature>
<feature type="repeat" description="WD 2">
    <location>
        <begin position="68"/>
        <end position="107"/>
    </location>
</feature>
<feature type="repeat" description="WD 3">
    <location>
        <begin position="472"/>
        <end position="512"/>
    </location>
</feature>
<feature type="region of interest" description="Disordered" evidence="4">
    <location>
        <begin position="673"/>
        <end position="710"/>
    </location>
</feature>
<feature type="region of interest" description="Disordered" evidence="4">
    <location>
        <begin position="975"/>
        <end position="1001"/>
    </location>
</feature>
<feature type="region of interest" description="Disordered" evidence="4">
    <location>
        <begin position="1017"/>
        <end position="1045"/>
    </location>
</feature>
<feature type="region of interest" description="Disordered" evidence="4">
    <location>
        <begin position="1238"/>
        <end position="1259"/>
    </location>
</feature>
<feature type="region of interest" description="Disordered" evidence="4">
    <location>
        <begin position="1385"/>
        <end position="1447"/>
    </location>
</feature>
<feature type="compositionally biased region" description="Low complexity" evidence="4">
    <location>
        <begin position="689"/>
        <end position="707"/>
    </location>
</feature>
<feature type="compositionally biased region" description="Polar residues" evidence="4">
    <location>
        <begin position="983"/>
        <end position="1001"/>
    </location>
</feature>
<feature type="compositionally biased region" description="Basic and acidic residues" evidence="4">
    <location>
        <begin position="1028"/>
        <end position="1045"/>
    </location>
</feature>
<feature type="compositionally biased region" description="Basic and acidic residues" evidence="4">
    <location>
        <begin position="1385"/>
        <end position="1403"/>
    </location>
</feature>
<feature type="compositionally biased region" description="Polar residues" evidence="4">
    <location>
        <begin position="1411"/>
        <end position="1424"/>
    </location>
</feature>
<feature type="compositionally biased region" description="Basic and acidic residues" evidence="4">
    <location>
        <begin position="1431"/>
        <end position="1447"/>
    </location>
</feature>
<feature type="splice variant" id="VSP_012311" description="In isoform a." evidence="5">
    <original>FFR</original>
    <variation>L</variation>
    <location>
        <begin position="975"/>
        <end position="977"/>
    </location>
</feature>
<reference key="1">
    <citation type="journal article" date="1998" name="Science">
        <title>Genome sequence of the nematode C. elegans: a platform for investigating biology.</title>
        <authorList>
            <consortium name="The C. elegans sequencing consortium"/>
        </authorList>
    </citation>
    <scope>NUCLEOTIDE SEQUENCE [LARGE SCALE GENOMIC DNA]</scope>
    <scope>ALTERNATIVE SPLICING</scope>
    <source>
        <strain>Bristol N2</strain>
    </source>
</reference>